<gene>
    <name evidence="1" type="primary">rpsI</name>
    <name type="ordered locus">Lm4b_02563</name>
</gene>
<comment type="similarity">
    <text evidence="1">Belongs to the universal ribosomal protein uS9 family.</text>
</comment>
<proteinExistence type="inferred from homology"/>
<feature type="chain" id="PRO_1000211839" description="Small ribosomal subunit protein uS9">
    <location>
        <begin position="1"/>
        <end position="130"/>
    </location>
</feature>
<feature type="region of interest" description="Disordered" evidence="2">
    <location>
        <begin position="109"/>
        <end position="130"/>
    </location>
</feature>
<feature type="compositionally biased region" description="Basic residues" evidence="2">
    <location>
        <begin position="111"/>
        <end position="130"/>
    </location>
</feature>
<keyword id="KW-0687">Ribonucleoprotein</keyword>
<keyword id="KW-0689">Ribosomal protein</keyword>
<reference key="1">
    <citation type="journal article" date="2012" name="BMC Genomics">
        <title>Comparative genomics and transcriptomics of lineages I, II, and III strains of Listeria monocytogenes.</title>
        <authorList>
            <person name="Hain T."/>
            <person name="Ghai R."/>
            <person name="Billion A."/>
            <person name="Kuenne C.T."/>
            <person name="Steinweg C."/>
            <person name="Izar B."/>
            <person name="Mohamed W."/>
            <person name="Mraheil M."/>
            <person name="Domann E."/>
            <person name="Schaffrath S."/>
            <person name="Karst U."/>
            <person name="Goesmann A."/>
            <person name="Oehm S."/>
            <person name="Puhler A."/>
            <person name="Merkl R."/>
            <person name="Vorwerk S."/>
            <person name="Glaser P."/>
            <person name="Garrido P."/>
            <person name="Rusniok C."/>
            <person name="Buchrieser C."/>
            <person name="Goebel W."/>
            <person name="Chakraborty T."/>
        </authorList>
    </citation>
    <scope>NUCLEOTIDE SEQUENCE [LARGE SCALE GENOMIC DNA]</scope>
    <source>
        <strain>CLIP80459</strain>
    </source>
</reference>
<protein>
    <recommendedName>
        <fullName evidence="1">Small ribosomal subunit protein uS9</fullName>
    </recommendedName>
    <alternativeName>
        <fullName evidence="3">30S ribosomal protein S9</fullName>
    </alternativeName>
</protein>
<accession>C1KZ11</accession>
<evidence type="ECO:0000255" key="1">
    <source>
        <dbReference type="HAMAP-Rule" id="MF_00532"/>
    </source>
</evidence>
<evidence type="ECO:0000256" key="2">
    <source>
        <dbReference type="SAM" id="MobiDB-lite"/>
    </source>
</evidence>
<evidence type="ECO:0000305" key="3"/>
<sequence length="130" mass="14448">MAQVQYYGTGRRKSSVARVRLVPGDGKIVINNRDWEDYIPFAALREVIKQPLVATETLGNYDVLVNVHGGGYTGQAGAIRHGVARALLQVAPEYRPALKSAGLLTRDPRMKERKKYGLKGARRAPQFSKR</sequence>
<dbReference type="EMBL" id="FM242711">
    <property type="protein sequence ID" value="CAS06318.1"/>
    <property type="molecule type" value="Genomic_DNA"/>
</dbReference>
<dbReference type="RefSeq" id="WP_003726075.1">
    <property type="nucleotide sequence ID" value="NC_012488.1"/>
</dbReference>
<dbReference type="SMR" id="C1KZ11"/>
<dbReference type="GeneID" id="93236018"/>
<dbReference type="KEGG" id="lmc:Lm4b_02563"/>
<dbReference type="HOGENOM" id="CLU_046483_2_1_9"/>
<dbReference type="GO" id="GO:0022627">
    <property type="term" value="C:cytosolic small ribosomal subunit"/>
    <property type="evidence" value="ECO:0007669"/>
    <property type="project" value="TreeGrafter"/>
</dbReference>
<dbReference type="GO" id="GO:0003723">
    <property type="term" value="F:RNA binding"/>
    <property type="evidence" value="ECO:0007669"/>
    <property type="project" value="TreeGrafter"/>
</dbReference>
<dbReference type="GO" id="GO:0003735">
    <property type="term" value="F:structural constituent of ribosome"/>
    <property type="evidence" value="ECO:0007669"/>
    <property type="project" value="InterPro"/>
</dbReference>
<dbReference type="GO" id="GO:0006412">
    <property type="term" value="P:translation"/>
    <property type="evidence" value="ECO:0007669"/>
    <property type="project" value="UniProtKB-UniRule"/>
</dbReference>
<dbReference type="FunFam" id="3.30.230.10:FF:000001">
    <property type="entry name" value="30S ribosomal protein S9"/>
    <property type="match status" value="1"/>
</dbReference>
<dbReference type="Gene3D" id="3.30.230.10">
    <property type="match status" value="1"/>
</dbReference>
<dbReference type="HAMAP" id="MF_00532_B">
    <property type="entry name" value="Ribosomal_uS9_B"/>
    <property type="match status" value="1"/>
</dbReference>
<dbReference type="InterPro" id="IPR020568">
    <property type="entry name" value="Ribosomal_Su5_D2-typ_SF"/>
</dbReference>
<dbReference type="InterPro" id="IPR000754">
    <property type="entry name" value="Ribosomal_uS9"/>
</dbReference>
<dbReference type="InterPro" id="IPR023035">
    <property type="entry name" value="Ribosomal_uS9_bac/plastid"/>
</dbReference>
<dbReference type="InterPro" id="IPR020574">
    <property type="entry name" value="Ribosomal_uS9_CS"/>
</dbReference>
<dbReference type="InterPro" id="IPR014721">
    <property type="entry name" value="Ribsml_uS5_D2-typ_fold_subgr"/>
</dbReference>
<dbReference type="NCBIfam" id="NF001099">
    <property type="entry name" value="PRK00132.1"/>
    <property type="match status" value="1"/>
</dbReference>
<dbReference type="PANTHER" id="PTHR21569">
    <property type="entry name" value="RIBOSOMAL PROTEIN S9"/>
    <property type="match status" value="1"/>
</dbReference>
<dbReference type="PANTHER" id="PTHR21569:SF1">
    <property type="entry name" value="SMALL RIBOSOMAL SUBUNIT PROTEIN US9M"/>
    <property type="match status" value="1"/>
</dbReference>
<dbReference type="Pfam" id="PF00380">
    <property type="entry name" value="Ribosomal_S9"/>
    <property type="match status" value="1"/>
</dbReference>
<dbReference type="SUPFAM" id="SSF54211">
    <property type="entry name" value="Ribosomal protein S5 domain 2-like"/>
    <property type="match status" value="1"/>
</dbReference>
<dbReference type="PROSITE" id="PS00360">
    <property type="entry name" value="RIBOSOMAL_S9"/>
    <property type="match status" value="1"/>
</dbReference>
<organism>
    <name type="scientific">Listeria monocytogenes serotype 4b (strain CLIP80459)</name>
    <dbReference type="NCBI Taxonomy" id="568819"/>
    <lineage>
        <taxon>Bacteria</taxon>
        <taxon>Bacillati</taxon>
        <taxon>Bacillota</taxon>
        <taxon>Bacilli</taxon>
        <taxon>Bacillales</taxon>
        <taxon>Listeriaceae</taxon>
        <taxon>Listeria</taxon>
    </lineage>
</organism>
<name>RS9_LISMC</name>